<gene>
    <name evidence="1" type="primary">rpsS</name>
    <name type="ordered locus">Rxyl_2151</name>
</gene>
<feature type="chain" id="PRO_0000265422" description="Small ribosomal subunit protein uS19">
    <location>
        <begin position="1"/>
        <end position="93"/>
    </location>
</feature>
<accession>Q1AU33</accession>
<reference key="1">
    <citation type="submission" date="2006-06" db="EMBL/GenBank/DDBJ databases">
        <title>Complete sequence of Rubrobacter xylanophilus DSM 9941.</title>
        <authorList>
            <consortium name="US DOE Joint Genome Institute"/>
            <person name="Copeland A."/>
            <person name="Lucas S."/>
            <person name="Lapidus A."/>
            <person name="Barry K."/>
            <person name="Detter J.C."/>
            <person name="Glavina del Rio T."/>
            <person name="Hammon N."/>
            <person name="Israni S."/>
            <person name="Dalin E."/>
            <person name="Tice H."/>
            <person name="Pitluck S."/>
            <person name="Munk A.C."/>
            <person name="Brettin T."/>
            <person name="Bruce D."/>
            <person name="Han C."/>
            <person name="Tapia R."/>
            <person name="Gilna P."/>
            <person name="Schmutz J."/>
            <person name="Larimer F."/>
            <person name="Land M."/>
            <person name="Hauser L."/>
            <person name="Kyrpides N."/>
            <person name="Lykidis A."/>
            <person name="da Costa M.S."/>
            <person name="Rainey F.A."/>
            <person name="Empadinhas N."/>
            <person name="Jolivet E."/>
            <person name="Battista J.R."/>
            <person name="Richardson P."/>
        </authorList>
    </citation>
    <scope>NUCLEOTIDE SEQUENCE [LARGE SCALE GENOMIC DNA]</scope>
    <source>
        <strain>DSM 9941 / JCM 11954 / NBRC 16129 / PRD-1</strain>
    </source>
</reference>
<keyword id="KW-1185">Reference proteome</keyword>
<keyword id="KW-0687">Ribonucleoprotein</keyword>
<keyword id="KW-0689">Ribosomal protein</keyword>
<keyword id="KW-0694">RNA-binding</keyword>
<keyword id="KW-0699">rRNA-binding</keyword>
<proteinExistence type="inferred from homology"/>
<name>RS19_RUBXD</name>
<organism>
    <name type="scientific">Rubrobacter xylanophilus (strain DSM 9941 / JCM 11954 / NBRC 16129 / PRD-1)</name>
    <dbReference type="NCBI Taxonomy" id="266117"/>
    <lineage>
        <taxon>Bacteria</taxon>
        <taxon>Bacillati</taxon>
        <taxon>Actinomycetota</taxon>
        <taxon>Rubrobacteria</taxon>
        <taxon>Rubrobacterales</taxon>
        <taxon>Rubrobacteraceae</taxon>
        <taxon>Rubrobacter</taxon>
    </lineage>
</organism>
<comment type="function">
    <text evidence="1">Protein S19 forms a complex with S13 that binds strongly to the 16S ribosomal RNA.</text>
</comment>
<comment type="similarity">
    <text evidence="1">Belongs to the universal ribosomal protein uS19 family.</text>
</comment>
<sequence>MTRSSKKEPFVEEKLMRRILEMNEKNEKRMIKTWSRASVIYPEMVGHTIAVHDGRKHVPVYITESMVGHRLGEFAPTRTFRSHKKDDRTARRR</sequence>
<dbReference type="EMBL" id="CP000386">
    <property type="protein sequence ID" value="ABG05095.1"/>
    <property type="molecule type" value="Genomic_DNA"/>
</dbReference>
<dbReference type="RefSeq" id="WP_011565110.1">
    <property type="nucleotide sequence ID" value="NC_008148.1"/>
</dbReference>
<dbReference type="SMR" id="Q1AU33"/>
<dbReference type="STRING" id="266117.Rxyl_2151"/>
<dbReference type="KEGG" id="rxy:Rxyl_2151"/>
<dbReference type="eggNOG" id="COG0185">
    <property type="taxonomic scope" value="Bacteria"/>
</dbReference>
<dbReference type="HOGENOM" id="CLU_144911_0_1_11"/>
<dbReference type="OrthoDB" id="9797833at2"/>
<dbReference type="PhylomeDB" id="Q1AU33"/>
<dbReference type="Proteomes" id="UP000006637">
    <property type="component" value="Chromosome"/>
</dbReference>
<dbReference type="GO" id="GO:0005737">
    <property type="term" value="C:cytoplasm"/>
    <property type="evidence" value="ECO:0007669"/>
    <property type="project" value="UniProtKB-ARBA"/>
</dbReference>
<dbReference type="GO" id="GO:0015935">
    <property type="term" value="C:small ribosomal subunit"/>
    <property type="evidence" value="ECO:0007669"/>
    <property type="project" value="InterPro"/>
</dbReference>
<dbReference type="GO" id="GO:0019843">
    <property type="term" value="F:rRNA binding"/>
    <property type="evidence" value="ECO:0007669"/>
    <property type="project" value="UniProtKB-UniRule"/>
</dbReference>
<dbReference type="GO" id="GO:0003735">
    <property type="term" value="F:structural constituent of ribosome"/>
    <property type="evidence" value="ECO:0007669"/>
    <property type="project" value="InterPro"/>
</dbReference>
<dbReference type="GO" id="GO:0000028">
    <property type="term" value="P:ribosomal small subunit assembly"/>
    <property type="evidence" value="ECO:0007669"/>
    <property type="project" value="TreeGrafter"/>
</dbReference>
<dbReference type="GO" id="GO:0006412">
    <property type="term" value="P:translation"/>
    <property type="evidence" value="ECO:0007669"/>
    <property type="project" value="UniProtKB-UniRule"/>
</dbReference>
<dbReference type="FunFam" id="3.30.860.10:FF:000001">
    <property type="entry name" value="30S ribosomal protein S19"/>
    <property type="match status" value="1"/>
</dbReference>
<dbReference type="Gene3D" id="3.30.860.10">
    <property type="entry name" value="30s Ribosomal Protein S19, Chain A"/>
    <property type="match status" value="1"/>
</dbReference>
<dbReference type="HAMAP" id="MF_00531">
    <property type="entry name" value="Ribosomal_uS19"/>
    <property type="match status" value="1"/>
</dbReference>
<dbReference type="InterPro" id="IPR002222">
    <property type="entry name" value="Ribosomal_uS19"/>
</dbReference>
<dbReference type="InterPro" id="IPR005732">
    <property type="entry name" value="Ribosomal_uS19_bac-type"/>
</dbReference>
<dbReference type="InterPro" id="IPR020934">
    <property type="entry name" value="Ribosomal_uS19_CS"/>
</dbReference>
<dbReference type="InterPro" id="IPR023575">
    <property type="entry name" value="Ribosomal_uS19_SF"/>
</dbReference>
<dbReference type="NCBIfam" id="TIGR01050">
    <property type="entry name" value="rpsS_bact"/>
    <property type="match status" value="1"/>
</dbReference>
<dbReference type="PANTHER" id="PTHR11880">
    <property type="entry name" value="RIBOSOMAL PROTEIN S19P FAMILY MEMBER"/>
    <property type="match status" value="1"/>
</dbReference>
<dbReference type="PANTHER" id="PTHR11880:SF8">
    <property type="entry name" value="SMALL RIBOSOMAL SUBUNIT PROTEIN US19M"/>
    <property type="match status" value="1"/>
</dbReference>
<dbReference type="Pfam" id="PF00203">
    <property type="entry name" value="Ribosomal_S19"/>
    <property type="match status" value="1"/>
</dbReference>
<dbReference type="PIRSF" id="PIRSF002144">
    <property type="entry name" value="Ribosomal_S19"/>
    <property type="match status" value="1"/>
</dbReference>
<dbReference type="PRINTS" id="PR00975">
    <property type="entry name" value="RIBOSOMALS19"/>
</dbReference>
<dbReference type="SUPFAM" id="SSF54570">
    <property type="entry name" value="Ribosomal protein S19"/>
    <property type="match status" value="1"/>
</dbReference>
<dbReference type="PROSITE" id="PS00323">
    <property type="entry name" value="RIBOSOMAL_S19"/>
    <property type="match status" value="1"/>
</dbReference>
<protein>
    <recommendedName>
        <fullName evidence="1">Small ribosomal subunit protein uS19</fullName>
    </recommendedName>
    <alternativeName>
        <fullName evidence="2">30S ribosomal protein S19</fullName>
    </alternativeName>
</protein>
<evidence type="ECO:0000255" key="1">
    <source>
        <dbReference type="HAMAP-Rule" id="MF_00531"/>
    </source>
</evidence>
<evidence type="ECO:0000305" key="2"/>